<dbReference type="EC" id="6.3.5.-" evidence="1"/>
<dbReference type="EMBL" id="CP000867">
    <property type="protein sequence ID" value="ABX02521.1"/>
    <property type="molecule type" value="Genomic_DNA"/>
</dbReference>
<dbReference type="SMR" id="A9AAZ8"/>
<dbReference type="STRING" id="444158.MmarC6_1709"/>
<dbReference type="KEGG" id="mmx:MmarC6_1709"/>
<dbReference type="eggNOG" id="arCOG01718">
    <property type="taxonomic scope" value="Archaea"/>
</dbReference>
<dbReference type="HOGENOM" id="CLU_019240_0_0_2"/>
<dbReference type="OrthoDB" id="52755at2157"/>
<dbReference type="PhylomeDB" id="A9AAZ8"/>
<dbReference type="GO" id="GO:0050566">
    <property type="term" value="F:asparaginyl-tRNA synthase (glutamine-hydrolyzing) activity"/>
    <property type="evidence" value="ECO:0007669"/>
    <property type="project" value="RHEA"/>
</dbReference>
<dbReference type="GO" id="GO:0005524">
    <property type="term" value="F:ATP binding"/>
    <property type="evidence" value="ECO:0007669"/>
    <property type="project" value="UniProtKB-KW"/>
</dbReference>
<dbReference type="GO" id="GO:0050567">
    <property type="term" value="F:glutaminyl-tRNA synthase (glutamine-hydrolyzing) activity"/>
    <property type="evidence" value="ECO:0007669"/>
    <property type="project" value="UniProtKB-UniRule"/>
</dbReference>
<dbReference type="GO" id="GO:0070681">
    <property type="term" value="P:glutaminyl-tRNAGln biosynthesis via transamidation"/>
    <property type="evidence" value="ECO:0007669"/>
    <property type="project" value="TreeGrafter"/>
</dbReference>
<dbReference type="GO" id="GO:0006412">
    <property type="term" value="P:translation"/>
    <property type="evidence" value="ECO:0007669"/>
    <property type="project" value="UniProtKB-UniRule"/>
</dbReference>
<dbReference type="FunFam" id="1.10.10.410:FF:000001">
    <property type="entry name" value="Aspartyl/glutamyl-tRNA(Asn/Gln) amidotransferase subunit B"/>
    <property type="match status" value="1"/>
</dbReference>
<dbReference type="Gene3D" id="1.10.10.410">
    <property type="match status" value="1"/>
</dbReference>
<dbReference type="Gene3D" id="1.10.150.380">
    <property type="entry name" value="GatB domain, N-terminal subdomain"/>
    <property type="match status" value="1"/>
</dbReference>
<dbReference type="HAMAP" id="MF_00121">
    <property type="entry name" value="GatB"/>
    <property type="match status" value="1"/>
</dbReference>
<dbReference type="InterPro" id="IPR017959">
    <property type="entry name" value="Asn/Gln-tRNA_amidoTrfase_suB/E"/>
</dbReference>
<dbReference type="InterPro" id="IPR006075">
    <property type="entry name" value="Asn/Gln-tRNA_Trfase_suB/E_cat"/>
</dbReference>
<dbReference type="InterPro" id="IPR018027">
    <property type="entry name" value="Asn/Gln_amidotransferase"/>
</dbReference>
<dbReference type="InterPro" id="IPR003789">
    <property type="entry name" value="Asn/Gln_tRNA_amidoTrase-B-like"/>
</dbReference>
<dbReference type="InterPro" id="IPR004413">
    <property type="entry name" value="GatB"/>
</dbReference>
<dbReference type="InterPro" id="IPR042114">
    <property type="entry name" value="GatB_C_1"/>
</dbReference>
<dbReference type="InterPro" id="IPR023168">
    <property type="entry name" value="GatB_Yqey_C_2"/>
</dbReference>
<dbReference type="InterPro" id="IPR017958">
    <property type="entry name" value="Gln-tRNA_amidoTrfase_suB_CS"/>
</dbReference>
<dbReference type="InterPro" id="IPR014746">
    <property type="entry name" value="Gln_synth/guanido_kin_cat_dom"/>
</dbReference>
<dbReference type="NCBIfam" id="TIGR00133">
    <property type="entry name" value="gatB"/>
    <property type="match status" value="1"/>
</dbReference>
<dbReference type="NCBIfam" id="NF004012">
    <property type="entry name" value="PRK05477.1-2"/>
    <property type="match status" value="1"/>
</dbReference>
<dbReference type="NCBIfam" id="NF004014">
    <property type="entry name" value="PRK05477.1-4"/>
    <property type="match status" value="1"/>
</dbReference>
<dbReference type="PANTHER" id="PTHR11659">
    <property type="entry name" value="GLUTAMYL-TRNA GLN AMIDOTRANSFERASE SUBUNIT B MITOCHONDRIAL AND PROKARYOTIC PET112-RELATED"/>
    <property type="match status" value="1"/>
</dbReference>
<dbReference type="PANTHER" id="PTHR11659:SF0">
    <property type="entry name" value="GLUTAMYL-TRNA(GLN) AMIDOTRANSFERASE SUBUNIT B, MITOCHONDRIAL"/>
    <property type="match status" value="1"/>
</dbReference>
<dbReference type="Pfam" id="PF02934">
    <property type="entry name" value="GatB_N"/>
    <property type="match status" value="1"/>
</dbReference>
<dbReference type="Pfam" id="PF02637">
    <property type="entry name" value="GatB_Yqey"/>
    <property type="match status" value="1"/>
</dbReference>
<dbReference type="SMART" id="SM00845">
    <property type="entry name" value="GatB_Yqey"/>
    <property type="match status" value="1"/>
</dbReference>
<dbReference type="SUPFAM" id="SSF89095">
    <property type="entry name" value="GatB/YqeY motif"/>
    <property type="match status" value="1"/>
</dbReference>
<dbReference type="SUPFAM" id="SSF55931">
    <property type="entry name" value="Glutamine synthetase/guanido kinase"/>
    <property type="match status" value="1"/>
</dbReference>
<dbReference type="PROSITE" id="PS01234">
    <property type="entry name" value="GATB"/>
    <property type="match status" value="1"/>
</dbReference>
<comment type="function">
    <text evidence="1">Allows the formation of correctly charged Asn-tRNA(Asn) or Gln-tRNA(Gln) through the transamidation of misacylated Asp-tRNA(Asn) or Glu-tRNA(Gln) in organisms which lack either or both of asparaginyl-tRNA or glutaminyl-tRNA synthetases. The reaction takes place in the presence of glutamine and ATP through an activated phospho-Asp-tRNA(Asn) or phospho-Glu-tRNA(Gln).</text>
</comment>
<comment type="catalytic activity">
    <reaction evidence="1">
        <text>L-glutamyl-tRNA(Gln) + L-glutamine + ATP + H2O = L-glutaminyl-tRNA(Gln) + L-glutamate + ADP + phosphate + H(+)</text>
        <dbReference type="Rhea" id="RHEA:17521"/>
        <dbReference type="Rhea" id="RHEA-COMP:9681"/>
        <dbReference type="Rhea" id="RHEA-COMP:9684"/>
        <dbReference type="ChEBI" id="CHEBI:15377"/>
        <dbReference type="ChEBI" id="CHEBI:15378"/>
        <dbReference type="ChEBI" id="CHEBI:29985"/>
        <dbReference type="ChEBI" id="CHEBI:30616"/>
        <dbReference type="ChEBI" id="CHEBI:43474"/>
        <dbReference type="ChEBI" id="CHEBI:58359"/>
        <dbReference type="ChEBI" id="CHEBI:78520"/>
        <dbReference type="ChEBI" id="CHEBI:78521"/>
        <dbReference type="ChEBI" id="CHEBI:456216"/>
    </reaction>
</comment>
<comment type="catalytic activity">
    <reaction evidence="1">
        <text>L-aspartyl-tRNA(Asn) + L-glutamine + ATP + H2O = L-asparaginyl-tRNA(Asn) + L-glutamate + ADP + phosphate + 2 H(+)</text>
        <dbReference type="Rhea" id="RHEA:14513"/>
        <dbReference type="Rhea" id="RHEA-COMP:9674"/>
        <dbReference type="Rhea" id="RHEA-COMP:9677"/>
        <dbReference type="ChEBI" id="CHEBI:15377"/>
        <dbReference type="ChEBI" id="CHEBI:15378"/>
        <dbReference type="ChEBI" id="CHEBI:29985"/>
        <dbReference type="ChEBI" id="CHEBI:30616"/>
        <dbReference type="ChEBI" id="CHEBI:43474"/>
        <dbReference type="ChEBI" id="CHEBI:58359"/>
        <dbReference type="ChEBI" id="CHEBI:78515"/>
        <dbReference type="ChEBI" id="CHEBI:78516"/>
        <dbReference type="ChEBI" id="CHEBI:456216"/>
    </reaction>
</comment>
<comment type="subunit">
    <text evidence="1">Heterotrimer of A, B and C subunits.</text>
</comment>
<comment type="similarity">
    <text evidence="1">Belongs to the GatB/GatE family. GatB subfamily.</text>
</comment>
<gene>
    <name evidence="1" type="primary">gatB</name>
    <name type="ordered locus">MmarC6_1709</name>
</gene>
<evidence type="ECO:0000255" key="1">
    <source>
        <dbReference type="HAMAP-Rule" id="MF_00121"/>
    </source>
</evidence>
<organism>
    <name type="scientific">Methanococcus maripaludis (strain C6 / ATCC BAA-1332)</name>
    <dbReference type="NCBI Taxonomy" id="444158"/>
    <lineage>
        <taxon>Archaea</taxon>
        <taxon>Methanobacteriati</taxon>
        <taxon>Methanobacteriota</taxon>
        <taxon>Methanomada group</taxon>
        <taxon>Methanococci</taxon>
        <taxon>Methanococcales</taxon>
        <taxon>Methanococcaceae</taxon>
        <taxon>Methanococcus</taxon>
    </lineage>
</organism>
<keyword id="KW-0067">ATP-binding</keyword>
<keyword id="KW-0436">Ligase</keyword>
<keyword id="KW-0547">Nucleotide-binding</keyword>
<keyword id="KW-0648">Protein biosynthesis</keyword>
<name>GATB_METM6</name>
<accession>A9AAZ8</accession>
<proteinExistence type="inferred from homology"/>
<reference key="1">
    <citation type="submission" date="2007-10" db="EMBL/GenBank/DDBJ databases">
        <title>Complete sequence of Methanococcus maripaludis C6.</title>
        <authorList>
            <consortium name="US DOE Joint Genome Institute"/>
            <person name="Copeland A."/>
            <person name="Lucas S."/>
            <person name="Lapidus A."/>
            <person name="Barry K."/>
            <person name="Glavina del Rio T."/>
            <person name="Dalin E."/>
            <person name="Tice H."/>
            <person name="Pitluck S."/>
            <person name="Clum A."/>
            <person name="Schmutz J."/>
            <person name="Larimer F."/>
            <person name="Land M."/>
            <person name="Hauser L."/>
            <person name="Kyrpides N."/>
            <person name="Mikhailova N."/>
            <person name="Sieprawska-Lupa M."/>
            <person name="Whitman W.B."/>
            <person name="Richardson P."/>
        </authorList>
    </citation>
    <scope>NUCLEOTIDE SEQUENCE [LARGE SCALE GENOMIC DNA]</scope>
    <source>
        <strain>C6 / ATCC BAA-1332</strain>
    </source>
</reference>
<sequence length="469" mass="53303">MSEDLSMKCGLEIHVQVDTNSKLFCQCPTNYKDVEPNTNICPVCIGHPGAKPMPPNKKAIDMAIMVAKMLGCEMVIDKDIYFQRKHYNYPDLPSGYQKTSVPIGEHGKFLGVGITEVHLEEDPGQYKPDLGTVDYNRSGTPLIEIVTDPDMKSPEEAREFLRQLLRLFRYIGNLRGEGTMRADTNISIKYNGIQGNRVEVKNVNSIRGVYKVLKYELIRQKNVLRRGGEIKLETRAFMESQMITKGMRSKETADDYRYIPDPDLQPIVLSNEWVEKVEAQMPETPMNKEKRFVEQYGIKEDDAKVLVSDLELADVFEKVVAELGNDKDGISLAVTWIRNELKRVLVYNKLEFFETNLKPEHMVELINSIKDKTISQKIGKTIIEQMVEYKGEKTPKELINEMGLTVIEDTSELEKACEEAIKNSDKAIEDYKSGNQRALNSVVGQVMKLTRGRAEPATVVEILKKKIDG</sequence>
<protein>
    <recommendedName>
        <fullName evidence="1">Aspartyl/glutamyl-tRNA(Asn/Gln) amidotransferase subunit B</fullName>
        <shortName evidence="1">Asp/Glu-ADT subunit B</shortName>
        <ecNumber evidence="1">6.3.5.-</ecNumber>
    </recommendedName>
</protein>
<feature type="chain" id="PRO_1000095222" description="Aspartyl/glutamyl-tRNA(Asn/Gln) amidotransferase subunit B">
    <location>
        <begin position="1"/>
        <end position="469"/>
    </location>
</feature>